<comment type="function">
    <text evidence="5 6 7 8 9 10">The heterodimer acts as an E1 ligase for SUMO1, SUMO2, SUMO3, and probably SUMO4. It mediates ATP-dependent activation of SUMO proteins followed by formation of a thioester bond between a SUMO protein and a conserved active site cysteine residue on UBA2/SAE2.</text>
</comment>
<comment type="pathway">
    <text>Protein modification; protein sumoylation.</text>
</comment>
<comment type="subunit">
    <text evidence="7 8 9 10">Heterodimer of SAE1 and UBA2/SAE2. The heterodimer corresponds to the two domains that are encoded on a single polypeptide chain in ubiquitin-activating enzyme E1. Interacts with UBE2I.</text>
</comment>
<comment type="interaction">
    <interactant intactId="EBI-718569">
        <id>Q9UBT2</id>
    </interactant>
    <interactant intactId="EBI-16439278">
        <id>Q6FHY5</id>
        <label>MEOX2</label>
    </interactant>
    <organismsDiffer>false</organismsDiffer>
    <experiments>3</experiments>
</comment>
<comment type="interaction">
    <interactant intactId="EBI-718569">
        <id>Q9UBT2</id>
    </interactant>
    <interactant intactId="EBI-743154">
        <id>Q9UBE0</id>
        <label>SAE1</label>
    </interactant>
    <organismsDiffer>false</organismsDiffer>
    <experiments>11</experiments>
</comment>
<comment type="interaction">
    <interactant intactId="EBI-718569">
        <id>Q9UBT2</id>
    </interactant>
    <interactant intactId="EBI-80140">
        <id>P63165</id>
        <label>SUMO1</label>
    </interactant>
    <organismsDiffer>false</organismsDiffer>
    <experiments>9</experiments>
</comment>
<comment type="interaction">
    <interactant intactId="EBI-718569">
        <id>Q9UBT2</id>
    </interactant>
    <interactant intactId="EBI-10175576">
        <id>G2XKQ0</id>
        <label>SUMO1P1</label>
    </interactant>
    <organismsDiffer>false</organismsDiffer>
    <experiments>3</experiments>
</comment>
<comment type="interaction">
    <interactant intactId="EBI-718569">
        <id>Q9UBT2</id>
    </interactant>
    <interactant intactId="EBI-80168">
        <id>P63279</id>
        <label>UBE2I</label>
    </interactant>
    <organismsDiffer>false</organismsDiffer>
    <experiments>8</experiments>
</comment>
<comment type="subcellular location">
    <subcellularLocation>
        <location>Cytoplasm</location>
    </subcellularLocation>
    <subcellularLocation>
        <location>Nucleus</location>
    </subcellularLocation>
    <text>Shuttles between the cytoplasm and the nucleus, sumoylation is required either for nuclear translocation or nuclear retention.</text>
</comment>
<comment type="alternative products">
    <event type="alternative splicing"/>
    <isoform>
        <id>Q9UBT2-1</id>
        <name>1</name>
        <sequence type="displayed"/>
    </isoform>
    <isoform>
        <id>Q9UBT2-2</id>
        <name>2</name>
        <sequence type="described" ref="VSP_056164"/>
    </isoform>
</comment>
<comment type="PTM">
    <text evidence="11 12">Sumoylated with SUMO1 and SUMO2/3 and by UBC9. Sumoylation at Lys-236 inhibits enzymatic activity. Sumoylation at the C-terminal lysine cluster plays an essential role in nuclear trafficking.</text>
</comment>
<comment type="disease" evidence="13 14">
    <disease id="DI-06471">
        <name>ACCES syndrome</name>
        <acronym>ACCES</acronym>
        <description>An autosomal dominant syndrome characterized by a highly variable phenotypic spectrum. Clinical features include aplasia cutis congenita, thin scalp hair, dry skin, dental anomalies, ectrodactyly, and skeletal and neurodevelopmental abnormalities. Craniofacial, cardiac, renal and genital anomalies have also been reported. Affected individuals have early growth deficiencies that improve with age.</description>
        <dbReference type="MIM" id="619959"/>
    </disease>
    <text>The disease is caused by variants affecting the gene represented in this entry.</text>
</comment>
<comment type="similarity">
    <text evidence="17">Belongs to the ubiquitin-activating E1 family.</text>
</comment>
<sequence>MALSRGLPRELAEAVAGGRVLVVGAGGIGCELLKNLVLTGFSHIDLIDLDTIDVSNLNRQFLFQKKHVGRSKAQVAKESVLQFYPKANIVAYHDSIMNPDYNVEFFRQFILVMNALDNRAARNHVNRMCLAADVPLIESGTAGYLGQVTTIKKGVTECYECHPKPTQRTFPGCTIRNTPSEPIHCIVWAKYLFNQLFGEEDADQEVSPDRADPEAAWEPTEAEARARASNEDGDIKRISTKEWAKSTGYDPVKLFTKLFKDDIRYLLTMDKLWRKRKPPVPLDWAEVQSQGEETNASDQQNEPQLGLKDQQVLDVKSYARLFSKSIETLRVHLAEKGDGAELIWDKDDPSAMDFVTSAANLRMHIFSMNMKSRFDIKSMAGNIIPAIATTNAVIAGLIVLEGLKILSGKIDQCRTIFLNKQPNPRKKLLVPCALDPPNPNCYVCASKPEVTVRLNVHKVTVLTLQDKIVKEKFAMVAPDVQIEDGKGTILISSEEGETEANNHKKLSEFGIRNGSRLQADDFLQDYTLLINILHSEDLGKDVEFEVVGDAPEKVGPKQAEDAAKSITNGSDDGAQPSTSTAQEQDDVLIVDSDEEDSSNNADVSEEERSRKRKLDEKENLSAKRSRIEQKEELDDVIALD</sequence>
<accession>Q9UBT2</accession>
<accession>B3KWB9</accession>
<accession>O95605</accession>
<accession>Q59H87</accession>
<accession>Q6IBP6</accession>
<accession>Q9NTJ1</accession>
<accession>Q9UED2</accession>
<protein>
    <recommendedName>
        <fullName>SUMO-activating enzyme subunit 2</fullName>
        <ecNumber>2.3.2.-</ecNumber>
    </recommendedName>
    <alternativeName>
        <fullName>Anthracycline-associated resistance ARX</fullName>
    </alternativeName>
    <alternativeName>
        <fullName>Ubiquitin-like 1-activating enzyme E1B</fullName>
    </alternativeName>
    <alternativeName>
        <fullName>Ubiquitin-like modifier-activating enzyme 2</fullName>
    </alternativeName>
</protein>
<name>SAE2_HUMAN</name>
<feature type="chain" id="PRO_0000194968" description="SUMO-activating enzyme subunit 2">
    <location>
        <begin position="1"/>
        <end position="640"/>
    </location>
</feature>
<feature type="region of interest" description="Disordered" evidence="3">
    <location>
        <begin position="202"/>
        <end position="231"/>
    </location>
</feature>
<feature type="region of interest" description="Disordered" evidence="3">
    <location>
        <begin position="551"/>
        <end position="640"/>
    </location>
</feature>
<feature type="compositionally biased region" description="Basic and acidic residues" evidence="3">
    <location>
        <begin position="222"/>
        <end position="231"/>
    </location>
</feature>
<feature type="compositionally biased region" description="Basic and acidic residues" evidence="3">
    <location>
        <begin position="551"/>
        <end position="563"/>
    </location>
</feature>
<feature type="compositionally biased region" description="Polar residues" evidence="3">
    <location>
        <begin position="565"/>
        <end position="582"/>
    </location>
</feature>
<feature type="compositionally biased region" description="Acidic residues" evidence="3">
    <location>
        <begin position="583"/>
        <end position="597"/>
    </location>
</feature>
<feature type="compositionally biased region" description="Basic and acidic residues" evidence="3">
    <location>
        <begin position="606"/>
        <end position="630"/>
    </location>
</feature>
<feature type="compositionally biased region" description="Acidic residues" evidence="3">
    <location>
        <begin position="631"/>
        <end position="640"/>
    </location>
</feature>
<feature type="active site" description="Glycyl thioester intermediate" evidence="2 7 10">
    <location>
        <position position="173"/>
    </location>
</feature>
<feature type="binding site" evidence="7">
    <location>
        <begin position="24"/>
        <end position="29"/>
    </location>
    <ligand>
        <name>ATP</name>
        <dbReference type="ChEBI" id="CHEBI:30616"/>
    </ligand>
</feature>
<feature type="binding site" evidence="7">
    <location>
        <position position="48"/>
    </location>
    <ligand>
        <name>ATP</name>
        <dbReference type="ChEBI" id="CHEBI:30616"/>
    </ligand>
</feature>
<feature type="binding site" evidence="7">
    <location>
        <begin position="56"/>
        <end position="59"/>
    </location>
    <ligand>
        <name>ATP</name>
        <dbReference type="ChEBI" id="CHEBI:30616"/>
    </ligand>
</feature>
<feature type="binding site" evidence="7">
    <location>
        <position position="72"/>
    </location>
    <ligand>
        <name>ATP</name>
        <dbReference type="ChEBI" id="CHEBI:30616"/>
    </ligand>
</feature>
<feature type="binding site" evidence="7">
    <location>
        <begin position="95"/>
        <end position="96"/>
    </location>
    <ligand>
        <name>ATP</name>
        <dbReference type="ChEBI" id="CHEBI:30616"/>
    </ligand>
</feature>
<feature type="binding site" evidence="7">
    <location>
        <begin position="117"/>
        <end position="122"/>
    </location>
    <ligand>
        <name>ATP</name>
        <dbReference type="ChEBI" id="CHEBI:30616"/>
    </ligand>
</feature>
<feature type="binding site">
    <location>
        <position position="158"/>
    </location>
    <ligand>
        <name>Zn(2+)</name>
        <dbReference type="ChEBI" id="CHEBI:29105"/>
    </ligand>
</feature>
<feature type="binding site">
    <location>
        <position position="161"/>
    </location>
    <ligand>
        <name>Zn(2+)</name>
        <dbReference type="ChEBI" id="CHEBI:29105"/>
    </ligand>
</feature>
<feature type="binding site">
    <location>
        <position position="441"/>
    </location>
    <ligand>
        <name>Zn(2+)</name>
        <dbReference type="ChEBI" id="CHEBI:29105"/>
    </ligand>
</feature>
<feature type="binding site">
    <location>
        <position position="444"/>
    </location>
    <ligand>
        <name>Zn(2+)</name>
        <dbReference type="ChEBI" id="CHEBI:29105"/>
    </ligand>
</feature>
<feature type="modified residue" description="Phosphoserine" evidence="22">
    <location>
        <position position="207"/>
    </location>
</feature>
<feature type="modified residue" description="N6-acetyllysine; alternate" evidence="19">
    <location>
        <position position="271"/>
    </location>
</feature>
<feature type="modified residue" description="Phosphoserine" evidence="20 21">
    <location>
        <position position="507"/>
    </location>
</feature>
<feature type="modified residue" description="Phosphoserine" evidence="18">
    <location>
        <position position="592"/>
    </location>
</feature>
<feature type="modified residue" description="N6-acetyllysine; alternate" evidence="1">
    <location>
        <position position="613"/>
    </location>
</feature>
<feature type="cross-link" description="Glycyl lysine isopeptide (Lys-Gly) (interchain with G-Cter in SUMO1)" evidence="23">
    <location>
        <position position="164"/>
    </location>
</feature>
<feature type="cross-link" description="Glycyl lysine isopeptide (Lys-Gly) (interchain with G-Cter in SUMO)">
    <location>
        <position position="190"/>
    </location>
</feature>
<feature type="cross-link" description="Glycyl lysine isopeptide (Lys-Gly) (interchain with G-Cter in SUMO1); alternate">
    <location>
        <position position="236"/>
    </location>
</feature>
<feature type="cross-link" description="Glycyl lysine isopeptide (Lys-Gly) (interchain with G-Cter in SUMO2); alternate" evidence="24 25">
    <location>
        <position position="236"/>
    </location>
</feature>
<feature type="cross-link" description="Glycyl lysine isopeptide (Lys-Gly) (interchain with G-Cter in SUMO); alternate">
    <location>
        <position position="257"/>
    </location>
</feature>
<feature type="cross-link" description="Glycyl lysine isopeptide (Lys-Gly) (interchain with G-Cter in SUMO2); alternate" evidence="25">
    <location>
        <position position="257"/>
    </location>
</feature>
<feature type="cross-link" description="Glycyl lysine isopeptide (Lys-Gly) (interchain with G-Cter in SUMO); alternate">
    <location>
        <position position="271"/>
    </location>
</feature>
<feature type="cross-link" description="Glycyl lysine isopeptide (Lys-Gly) (interchain with G-Cter in SUMO)">
    <location>
        <position position="275"/>
    </location>
</feature>
<feature type="cross-link" description="Glycyl lysine isopeptide (Lys-Gly) (interchain with G-Cter in SUMO2)" evidence="25">
    <location>
        <position position="371"/>
    </location>
</feature>
<feature type="cross-link" description="Glycyl lysine isopeptide (Lys-Gly) (interchain with G-Cter in SUMO1); alternate" evidence="23">
    <location>
        <position position="420"/>
    </location>
</feature>
<feature type="cross-link" description="Glycyl lysine isopeptide (Lys-Gly) (interchain with G-Cter in SUMO2); alternate" evidence="25">
    <location>
        <position position="420"/>
    </location>
</feature>
<feature type="cross-link" description="Glycyl lysine isopeptide (Lys-Gly) (interchain with G-Cter in SUMO2)" evidence="25">
    <location>
        <position position="540"/>
    </location>
</feature>
<feature type="cross-link" description="Glycyl lysine isopeptide (Lys-Gly) (interchain with G-Cter in SUMO)">
    <location>
        <position position="611"/>
    </location>
</feature>
<feature type="cross-link" description="Glycyl lysine isopeptide (Lys-Gly) (interchain with G-Cter in SUMO); alternate">
    <location>
        <position position="613"/>
    </location>
</feature>
<feature type="cross-link" description="Glycyl lysine isopeptide (Lys-Gly) (interchain with G-Cter in SUMO)">
    <location>
        <position position="617"/>
    </location>
</feature>
<feature type="cross-link" description="Glycyl lysine isopeptide (Lys-Gly) (interchain with G-Cter in SUMO)">
    <location>
        <position position="623"/>
    </location>
</feature>
<feature type="splice variant" id="VSP_056164" description="In isoform 2." evidence="16">
    <location>
        <begin position="1"/>
        <end position="96"/>
    </location>
</feature>
<feature type="sequence variant" id="VAR_087611" description="In ACCES; loss of function; does not rescue the abnormal phenotype in a zebrafish disease model; dbSNP:rs2075211884." evidence="13 14">
    <original>G</original>
    <variation>V</variation>
    <location>
        <position position="24"/>
    </location>
</feature>
<feature type="sequence variant" id="VAR_087612" description="In ACCES; dbSNP:rs2075242496." evidence="14">
    <original>N</original>
    <variation>T</variation>
    <location>
        <position position="56"/>
    </location>
</feature>
<feature type="sequence variant" id="VAR_087613" description="In ACCES." evidence="14">
    <location>
        <begin position="122"/>
        <end position="640"/>
    </location>
</feature>
<feature type="sequence variant" id="VAR_087614" description="In ACCES; loss of function; does not rescue the abnormal phenotype in a zebrafish disease model; dbSNP:rs1599889628." evidence="14">
    <original>R</original>
    <variation>G</variation>
    <location>
        <position position="122"/>
    </location>
</feature>
<feature type="sequence variant" id="VAR_087615" description="In ACCES." evidence="14">
    <location>
        <begin position="267"/>
        <end position="640"/>
    </location>
</feature>
<feature type="sequence variant" id="VAR_017689" description="In dbSNP:rs1043062." evidence="4 15">
    <original>L</original>
    <variation>R</variation>
    <location>
        <position position="307"/>
    </location>
</feature>
<feature type="sequence variant" id="VAR_087616" description="In ACCES; loss of function; does not rescue the abnormal phenotype in a zebrafish disease model; dbSNP:rs2075619600." evidence="14">
    <original>E</original>
    <variation>K</variation>
    <location>
        <position position="483"/>
    </location>
</feature>
<feature type="mutagenesis site" description="Abolishes ATP-dependent activation of SUMO proteins." evidence="10">
    <original>N</original>
    <variation>A</variation>
    <location>
        <position position="56"/>
    </location>
</feature>
<feature type="mutagenesis site" description="Strongly reduces ATP-dependent activation of SUMO proteins." evidence="10">
    <original>L</original>
    <variation>A</variation>
    <location>
        <position position="57"/>
    </location>
</feature>
<feature type="mutagenesis site" description="Strongly reduces ATP-dependent activation of SUMO proteins." evidence="10">
    <original>R</original>
    <variation>A</variation>
    <location>
        <position position="59"/>
    </location>
</feature>
<feature type="mutagenesis site" description="Abolishes ATP-dependent activation of SUMO proteins." evidence="10">
    <original>K</original>
    <variation>A</variation>
    <location>
        <position position="72"/>
    </location>
</feature>
<feature type="mutagenesis site" description="Abolishes ATP-dependent activation of SUMO proteins." evidence="10">
    <original>D</original>
    <variation>A</variation>
    <location>
        <position position="117"/>
    </location>
</feature>
<feature type="mutagenesis site" description="Loss of enzyme activity." evidence="10">
    <original>C</original>
    <variation>A</variation>
    <location>
        <position position="173"/>
    </location>
</feature>
<feature type="mutagenesis site" description="Slightly reduced enzyme activity." evidence="10">
    <original>T</original>
    <variation>A</variation>
    <location>
        <position position="174"/>
    </location>
</feature>
<feature type="mutagenesis site" description="No effect on enzyme activity." evidence="10">
    <original>H</original>
    <variation>Q</variation>
    <location>
        <position position="184"/>
    </location>
</feature>
<feature type="mutagenesis site" description="Strongly reduced interaction with UBE2I; when associated with A-238." evidence="8">
    <original>I</original>
    <variation>A</variation>
    <location>
        <position position="235"/>
    </location>
</feature>
<feature type="mutagenesis site" description="Strongly reduced interaction with UBE2I; when associated with A-235." evidence="8">
    <original>I</original>
    <variation>A</variation>
    <location>
        <position position="238"/>
    </location>
</feature>
<feature type="mutagenesis site" description="Strongly reduced interaction with UBE2I." evidence="9">
    <location>
        <position position="484"/>
    </location>
</feature>
<feature type="mutagenesis site" description="Strongly reduced interaction with UBE2I." evidence="9">
    <original>G</original>
    <variation>GGGG</variation>
    <location>
        <position position="485"/>
    </location>
</feature>
<feature type="sequence conflict" description="In Ref. 1; AAD12784 and 2; AAD23914." evidence="17" ref="1 2">
    <original>S</original>
    <variation>C</variation>
    <location>
        <position position="229"/>
    </location>
</feature>
<feature type="sequence conflict" description="In Ref. 5; CAB66839." evidence="17" ref="5">
    <original>E</original>
    <variation>G</variation>
    <location>
        <position position="341"/>
    </location>
</feature>
<feature type="sequence conflict" description="In Ref. 11; BAD92109." evidence="17" ref="11">
    <original>V</original>
    <variation>L</variation>
    <location>
        <position position="456"/>
    </location>
</feature>
<feature type="helix" evidence="33">
    <location>
        <begin position="9"/>
        <end position="17"/>
    </location>
</feature>
<feature type="strand" evidence="33">
    <location>
        <begin position="20"/>
        <end position="23"/>
    </location>
</feature>
<feature type="helix" evidence="33">
    <location>
        <begin position="27"/>
        <end position="39"/>
    </location>
</feature>
<feature type="strand" evidence="33">
    <location>
        <begin position="43"/>
        <end position="48"/>
    </location>
</feature>
<feature type="helix" evidence="33">
    <location>
        <begin position="54"/>
        <end position="58"/>
    </location>
</feature>
<feature type="helix" evidence="33">
    <location>
        <begin position="65"/>
        <end position="67"/>
    </location>
</feature>
<feature type="helix" evidence="33">
    <location>
        <begin position="72"/>
        <end position="83"/>
    </location>
</feature>
<feature type="strand" evidence="33">
    <location>
        <begin position="88"/>
        <end position="94"/>
    </location>
</feature>
<feature type="helix" evidence="33">
    <location>
        <begin position="103"/>
        <end position="106"/>
    </location>
</feature>
<feature type="strand" evidence="33">
    <location>
        <begin position="110"/>
        <end position="114"/>
    </location>
</feature>
<feature type="helix" evidence="33">
    <location>
        <begin position="119"/>
        <end position="132"/>
    </location>
</feature>
<feature type="strand" evidence="33">
    <location>
        <begin position="136"/>
        <end position="142"/>
    </location>
</feature>
<feature type="strand" evidence="33">
    <location>
        <begin position="145"/>
        <end position="151"/>
    </location>
</feature>
<feature type="turn" evidence="33">
    <location>
        <begin position="153"/>
        <end position="155"/>
    </location>
</feature>
<feature type="strand" evidence="31">
    <location>
        <begin position="168"/>
        <end position="170"/>
    </location>
</feature>
<feature type="helix" evidence="33">
    <location>
        <begin position="172"/>
        <end position="176"/>
    </location>
</feature>
<feature type="helix" evidence="33">
    <location>
        <begin position="182"/>
        <end position="197"/>
    </location>
</feature>
<feature type="helix" evidence="33">
    <location>
        <begin position="202"/>
        <end position="204"/>
    </location>
</feature>
<feature type="turn" evidence="33">
    <location>
        <begin position="213"/>
        <end position="215"/>
    </location>
</feature>
<feature type="helix" evidence="33">
    <location>
        <begin position="219"/>
        <end position="223"/>
    </location>
</feature>
<feature type="strand" evidence="28">
    <location>
        <begin position="225"/>
        <end position="227"/>
    </location>
</feature>
<feature type="strand" evidence="28">
    <location>
        <begin position="234"/>
        <end position="236"/>
    </location>
</feature>
<feature type="helix" evidence="33">
    <location>
        <begin position="241"/>
        <end position="245"/>
    </location>
</feature>
<feature type="turn" evidence="33">
    <location>
        <begin position="246"/>
        <end position="248"/>
    </location>
</feature>
<feature type="helix" evidence="33">
    <location>
        <begin position="251"/>
        <end position="259"/>
    </location>
</feature>
<feature type="helix" evidence="33">
    <location>
        <begin position="261"/>
        <end position="268"/>
    </location>
</feature>
<feature type="helix" evidence="33">
    <location>
        <begin position="270"/>
        <end position="273"/>
    </location>
</feature>
<feature type="strand" evidence="26">
    <location>
        <begin position="274"/>
        <end position="276"/>
    </location>
</feature>
<feature type="helix" evidence="33">
    <location>
        <begin position="284"/>
        <end position="288"/>
    </location>
</feature>
<feature type="helix" evidence="33">
    <location>
        <begin position="308"/>
        <end position="310"/>
    </location>
</feature>
<feature type="helix" evidence="33">
    <location>
        <begin position="315"/>
        <end position="335"/>
    </location>
</feature>
<feature type="turn" evidence="27">
    <location>
        <begin position="337"/>
        <end position="339"/>
    </location>
</feature>
<feature type="helix" evidence="33">
    <location>
        <begin position="349"/>
        <end position="365"/>
    </location>
</feature>
<feature type="helix" evidence="33">
    <location>
        <begin position="373"/>
        <end position="381"/>
    </location>
</feature>
<feature type="helix" evidence="33">
    <location>
        <begin position="388"/>
        <end position="405"/>
    </location>
</feature>
<feature type="turn" evidence="33">
    <location>
        <begin position="406"/>
        <end position="408"/>
    </location>
</feature>
<feature type="helix" evidence="33">
    <location>
        <begin position="410"/>
        <end position="412"/>
    </location>
</feature>
<feature type="strand" evidence="33">
    <location>
        <begin position="415"/>
        <end position="418"/>
    </location>
</feature>
<feature type="strand" evidence="33">
    <location>
        <begin position="426"/>
        <end position="432"/>
    </location>
</feature>
<feature type="turn" evidence="33">
    <location>
        <begin position="442"/>
        <end position="444"/>
    </location>
</feature>
<feature type="strand" evidence="33">
    <location>
        <begin position="445"/>
        <end position="447"/>
    </location>
</feature>
<feature type="strand" evidence="33">
    <location>
        <begin position="449"/>
        <end position="454"/>
    </location>
</feature>
<feature type="turn" evidence="33">
    <location>
        <begin position="456"/>
        <end position="458"/>
    </location>
</feature>
<feature type="helix" evidence="33">
    <location>
        <begin position="461"/>
        <end position="466"/>
    </location>
</feature>
<feature type="helix" evidence="33">
    <location>
        <begin position="467"/>
        <end position="472"/>
    </location>
</feature>
<feature type="strand" evidence="33">
    <location>
        <begin position="476"/>
        <end position="479"/>
    </location>
</feature>
<feature type="strand" evidence="33">
    <location>
        <begin position="481"/>
        <end position="483"/>
    </location>
</feature>
<feature type="strand" evidence="30">
    <location>
        <begin position="484"/>
        <end position="486"/>
    </location>
</feature>
<feature type="strand" evidence="30">
    <location>
        <begin position="488"/>
        <end position="491"/>
    </location>
</feature>
<feature type="strand" evidence="26">
    <location>
        <begin position="493"/>
        <end position="498"/>
    </location>
</feature>
<feature type="helix" evidence="30">
    <location>
        <begin position="499"/>
        <end position="501"/>
    </location>
</feature>
<feature type="strand" evidence="32">
    <location>
        <begin position="503"/>
        <end position="505"/>
    </location>
</feature>
<feature type="helix" evidence="33">
    <location>
        <begin position="506"/>
        <end position="509"/>
    </location>
</feature>
<feature type="strand" evidence="33">
    <location>
        <begin position="516"/>
        <end position="521"/>
    </location>
</feature>
<feature type="turn" evidence="33">
    <location>
        <begin position="522"/>
        <end position="525"/>
    </location>
</feature>
<feature type="strand" evidence="33">
    <location>
        <begin position="526"/>
        <end position="534"/>
    </location>
</feature>
<feature type="strand" evidence="33">
    <location>
        <begin position="544"/>
        <end position="546"/>
    </location>
</feature>
<feature type="turn" evidence="29">
    <location>
        <begin position="609"/>
        <end position="611"/>
    </location>
</feature>
<feature type="turn" evidence="29">
    <location>
        <begin position="614"/>
        <end position="619"/>
    </location>
</feature>
<feature type="helix" evidence="29">
    <location>
        <begin position="620"/>
        <end position="626"/>
    </location>
</feature>
<feature type="helix" evidence="29">
    <location>
        <begin position="627"/>
        <end position="629"/>
    </location>
</feature>
<feature type="strand" evidence="29">
    <location>
        <begin position="636"/>
        <end position="638"/>
    </location>
</feature>
<evidence type="ECO:0000250" key="1">
    <source>
        <dbReference type="UniProtKB" id="Q9Z1F9"/>
    </source>
</evidence>
<evidence type="ECO:0000255" key="2">
    <source>
        <dbReference type="PROSITE-ProRule" id="PRU10132"/>
    </source>
</evidence>
<evidence type="ECO:0000256" key="3">
    <source>
        <dbReference type="SAM" id="MobiDB-lite"/>
    </source>
</evidence>
<evidence type="ECO:0000269" key="4">
    <source>
    </source>
</evidence>
<evidence type="ECO:0000269" key="5">
    <source>
    </source>
</evidence>
<evidence type="ECO:0000269" key="6">
    <source>
    </source>
</evidence>
<evidence type="ECO:0000269" key="7">
    <source>
    </source>
</evidence>
<evidence type="ECO:0000269" key="8">
    <source>
    </source>
</evidence>
<evidence type="ECO:0000269" key="9">
    <source>
    </source>
</evidence>
<evidence type="ECO:0000269" key="10">
    <source>
    </source>
</evidence>
<evidence type="ECO:0000269" key="11">
    <source>
    </source>
</evidence>
<evidence type="ECO:0000269" key="12">
    <source>
    </source>
</evidence>
<evidence type="ECO:0000269" key="13">
    <source>
    </source>
</evidence>
<evidence type="ECO:0000269" key="14">
    <source>
    </source>
</evidence>
<evidence type="ECO:0000269" key="15">
    <source>
    </source>
</evidence>
<evidence type="ECO:0000303" key="16">
    <source>
    </source>
</evidence>
<evidence type="ECO:0000305" key="17"/>
<evidence type="ECO:0007744" key="18">
    <source>
    </source>
</evidence>
<evidence type="ECO:0007744" key="19">
    <source>
    </source>
</evidence>
<evidence type="ECO:0007744" key="20">
    <source>
    </source>
</evidence>
<evidence type="ECO:0007744" key="21">
    <source>
    </source>
</evidence>
<evidence type="ECO:0007744" key="22">
    <source>
    </source>
</evidence>
<evidence type="ECO:0007744" key="23">
    <source>
    </source>
</evidence>
<evidence type="ECO:0007744" key="24">
    <source>
    </source>
</evidence>
<evidence type="ECO:0007744" key="25">
    <source>
    </source>
</evidence>
<evidence type="ECO:0007829" key="26">
    <source>
        <dbReference type="PDB" id="1Y8Q"/>
    </source>
</evidence>
<evidence type="ECO:0007829" key="27">
    <source>
        <dbReference type="PDB" id="1Y8R"/>
    </source>
</evidence>
<evidence type="ECO:0007829" key="28">
    <source>
        <dbReference type="PDB" id="2PX9"/>
    </source>
</evidence>
<evidence type="ECO:0007829" key="29">
    <source>
        <dbReference type="PDB" id="3KYC"/>
    </source>
</evidence>
<evidence type="ECO:0007829" key="30">
    <source>
        <dbReference type="PDB" id="5FQ2"/>
    </source>
</evidence>
<evidence type="ECO:0007829" key="31">
    <source>
        <dbReference type="PDB" id="6CWY"/>
    </source>
</evidence>
<evidence type="ECO:0007829" key="32">
    <source>
        <dbReference type="PDB" id="6CWZ"/>
    </source>
</evidence>
<evidence type="ECO:0007829" key="33">
    <source>
        <dbReference type="PDB" id="6XOG"/>
    </source>
</evidence>
<reference key="1">
    <citation type="journal article" date="1999" name="Biochem. Biophys. Res. Commun.">
        <title>In vitro SUMO-1 modification requires two enzymatic steps, E1 and E2.</title>
        <authorList>
            <person name="Okuma T."/>
            <person name="Honda R."/>
            <person name="Ichikawa G."/>
            <person name="Tsumagari N."/>
            <person name="Yasuda H."/>
        </authorList>
    </citation>
    <scope>NUCLEOTIDE SEQUENCE [MRNA] (ISOFORM 1)</scope>
    <scope>VARIANT ARG-307</scope>
    <source>
        <tissue>Cervix carcinoma</tissue>
    </source>
</reference>
<reference key="2">
    <citation type="journal article" date="1999" name="FEBS Lett.">
        <title>Molecular cloning and characterization of human AOS1 and UBA2, components of the sentrin-activating enzyme complex.</title>
        <authorList>
            <person name="Gong L."/>
            <person name="Li B."/>
            <person name="Millas S."/>
            <person name="Yeh E.T.H."/>
        </authorList>
    </citation>
    <scope>NUCLEOTIDE SEQUENCE [MRNA] (ISOFORM 1)</scope>
    <scope>VARIANT ARG-307</scope>
    <source>
        <tissue>Placenta</tissue>
    </source>
</reference>
<reference key="3">
    <citation type="journal article" date="1999" name="J. Biol. Chem.">
        <title>Identification of the enzyme required for activation of the small ubiquitin-like protein SUMO-1.</title>
        <authorList>
            <person name="Desterro J.M.P."/>
            <person name="Rodriguez M.S."/>
            <person name="Kemp G.D."/>
            <person name="Hay R.T."/>
        </authorList>
    </citation>
    <scope>NUCLEOTIDE SEQUENCE [MRNA] (ISOFORM 1)</scope>
</reference>
<reference key="4">
    <citation type="submission" date="1995-09" db="EMBL/GenBank/DDBJ databases">
        <authorList>
            <person name="Slapak C."/>
            <person name="Mizunuma N."/>
            <person name="Terashima M."/>
            <person name="Yamauchi T."/>
            <person name="Kufe D."/>
        </authorList>
    </citation>
    <scope>NUCLEOTIDE SEQUENCE [MRNA] (ISOFORM 1)</scope>
</reference>
<reference key="5">
    <citation type="journal article" date="2001" name="Genome Res.">
        <title>Towards a catalog of human genes and proteins: sequencing and analysis of 500 novel complete protein coding human cDNAs.</title>
        <authorList>
            <person name="Wiemann S."/>
            <person name="Weil B."/>
            <person name="Wellenreuther R."/>
            <person name="Gassenhuber J."/>
            <person name="Glassl S."/>
            <person name="Ansorge W."/>
            <person name="Boecher M."/>
            <person name="Bloecker H."/>
            <person name="Bauersachs S."/>
            <person name="Blum H."/>
            <person name="Lauber J."/>
            <person name="Duesterhoeft A."/>
            <person name="Beyer A."/>
            <person name="Koehrer K."/>
            <person name="Strack N."/>
            <person name="Mewes H.-W."/>
            <person name="Ottenwaelder B."/>
            <person name="Obermaier B."/>
            <person name="Tampe J."/>
            <person name="Heubner D."/>
            <person name="Wambutt R."/>
            <person name="Korn B."/>
            <person name="Klein M."/>
            <person name="Poustka A."/>
        </authorList>
    </citation>
    <scope>NUCLEOTIDE SEQUENCE [LARGE SCALE MRNA] (ISOFORM 1)</scope>
    <source>
        <tissue>Testis</tissue>
    </source>
</reference>
<reference key="6">
    <citation type="journal article" date="2004" name="Nat. Genet.">
        <title>Complete sequencing and characterization of 21,243 full-length human cDNAs.</title>
        <authorList>
            <person name="Ota T."/>
            <person name="Suzuki Y."/>
            <person name="Nishikawa T."/>
            <person name="Otsuki T."/>
            <person name="Sugiyama T."/>
            <person name="Irie R."/>
            <person name="Wakamatsu A."/>
            <person name="Hayashi K."/>
            <person name="Sato H."/>
            <person name="Nagai K."/>
            <person name="Kimura K."/>
            <person name="Makita H."/>
            <person name="Sekine M."/>
            <person name="Obayashi M."/>
            <person name="Nishi T."/>
            <person name="Shibahara T."/>
            <person name="Tanaka T."/>
            <person name="Ishii S."/>
            <person name="Yamamoto J."/>
            <person name="Saito K."/>
            <person name="Kawai Y."/>
            <person name="Isono Y."/>
            <person name="Nakamura Y."/>
            <person name="Nagahari K."/>
            <person name="Murakami K."/>
            <person name="Yasuda T."/>
            <person name="Iwayanagi T."/>
            <person name="Wagatsuma M."/>
            <person name="Shiratori A."/>
            <person name="Sudo H."/>
            <person name="Hosoiri T."/>
            <person name="Kaku Y."/>
            <person name="Kodaira H."/>
            <person name="Kondo H."/>
            <person name="Sugawara M."/>
            <person name="Takahashi M."/>
            <person name="Kanda K."/>
            <person name="Yokoi T."/>
            <person name="Furuya T."/>
            <person name="Kikkawa E."/>
            <person name="Omura Y."/>
            <person name="Abe K."/>
            <person name="Kamihara K."/>
            <person name="Katsuta N."/>
            <person name="Sato K."/>
            <person name="Tanikawa M."/>
            <person name="Yamazaki M."/>
            <person name="Ninomiya K."/>
            <person name="Ishibashi T."/>
            <person name="Yamashita H."/>
            <person name="Murakawa K."/>
            <person name="Fujimori K."/>
            <person name="Tanai H."/>
            <person name="Kimata M."/>
            <person name="Watanabe M."/>
            <person name="Hiraoka S."/>
            <person name="Chiba Y."/>
            <person name="Ishida S."/>
            <person name="Ono Y."/>
            <person name="Takiguchi S."/>
            <person name="Watanabe S."/>
            <person name="Yosida M."/>
            <person name="Hotuta T."/>
            <person name="Kusano J."/>
            <person name="Kanehori K."/>
            <person name="Takahashi-Fujii A."/>
            <person name="Hara H."/>
            <person name="Tanase T.-O."/>
            <person name="Nomura Y."/>
            <person name="Togiya S."/>
            <person name="Komai F."/>
            <person name="Hara R."/>
            <person name="Takeuchi K."/>
            <person name="Arita M."/>
            <person name="Imose N."/>
            <person name="Musashino K."/>
            <person name="Yuuki H."/>
            <person name="Oshima A."/>
            <person name="Sasaki N."/>
            <person name="Aotsuka S."/>
            <person name="Yoshikawa Y."/>
            <person name="Matsunawa H."/>
            <person name="Ichihara T."/>
            <person name="Shiohata N."/>
            <person name="Sano S."/>
            <person name="Moriya S."/>
            <person name="Momiyama H."/>
            <person name="Satoh N."/>
            <person name="Takami S."/>
            <person name="Terashima Y."/>
            <person name="Suzuki O."/>
            <person name="Nakagawa S."/>
            <person name="Senoh A."/>
            <person name="Mizoguchi H."/>
            <person name="Goto Y."/>
            <person name="Shimizu F."/>
            <person name="Wakebe H."/>
            <person name="Hishigaki H."/>
            <person name="Watanabe T."/>
            <person name="Sugiyama A."/>
            <person name="Takemoto M."/>
            <person name="Kawakami B."/>
            <person name="Yamazaki M."/>
            <person name="Watanabe K."/>
            <person name="Kumagai A."/>
            <person name="Itakura S."/>
            <person name="Fukuzumi Y."/>
            <person name="Fujimori Y."/>
            <person name="Komiyama M."/>
            <person name="Tashiro H."/>
            <person name="Tanigami A."/>
            <person name="Fujiwara T."/>
            <person name="Ono T."/>
            <person name="Yamada K."/>
            <person name="Fujii Y."/>
            <person name="Ozaki K."/>
            <person name="Hirao M."/>
            <person name="Ohmori Y."/>
            <person name="Kawabata A."/>
            <person name="Hikiji T."/>
            <person name="Kobatake N."/>
            <person name="Inagaki H."/>
            <person name="Ikema Y."/>
            <person name="Okamoto S."/>
            <person name="Okitani R."/>
            <person name="Kawakami T."/>
            <person name="Noguchi S."/>
            <person name="Itoh T."/>
            <person name="Shigeta K."/>
            <person name="Senba T."/>
            <person name="Matsumura K."/>
            <person name="Nakajima Y."/>
            <person name="Mizuno T."/>
            <person name="Morinaga M."/>
            <person name="Sasaki M."/>
            <person name="Togashi T."/>
            <person name="Oyama M."/>
            <person name="Hata H."/>
            <person name="Watanabe M."/>
            <person name="Komatsu T."/>
            <person name="Mizushima-Sugano J."/>
            <person name="Satoh T."/>
            <person name="Shirai Y."/>
            <person name="Takahashi Y."/>
            <person name="Nakagawa K."/>
            <person name="Okumura K."/>
            <person name="Nagase T."/>
            <person name="Nomura N."/>
            <person name="Kikuchi H."/>
            <person name="Masuho Y."/>
            <person name="Yamashita R."/>
            <person name="Nakai K."/>
            <person name="Yada T."/>
            <person name="Nakamura Y."/>
            <person name="Ohara O."/>
            <person name="Isogai T."/>
            <person name="Sugano S."/>
        </authorList>
    </citation>
    <scope>NUCLEOTIDE SEQUENCE [LARGE SCALE MRNA] (ISOFORM 2)</scope>
    <source>
        <tissue>Brain</tissue>
    </source>
</reference>
<reference key="7">
    <citation type="submission" date="2003-08" db="EMBL/GenBank/DDBJ databases">
        <title>Cloning of human full-length CDSs in BD Creator(TM) system donor vector.</title>
        <authorList>
            <person name="Kalnine N."/>
            <person name="Chen X."/>
            <person name="Rolfs A."/>
            <person name="Halleck A."/>
            <person name="Hines L."/>
            <person name="Eisenstein S."/>
            <person name="Koundinya M."/>
            <person name="Raphael J."/>
            <person name="Moreira D."/>
            <person name="Kelley T."/>
            <person name="LaBaer J."/>
            <person name="Lin Y."/>
            <person name="Phelan M."/>
            <person name="Farmer A."/>
        </authorList>
    </citation>
    <scope>NUCLEOTIDE SEQUENCE [LARGE SCALE MRNA] (ISOFORM 1)</scope>
</reference>
<reference key="8">
    <citation type="submission" date="2004-06" db="EMBL/GenBank/DDBJ databases">
        <title>Cloning of human full open reading frames in Gateway(TM) system entry vector (pDONR201).</title>
        <authorList>
            <person name="Ebert L."/>
            <person name="Schick M."/>
            <person name="Neubert P."/>
            <person name="Schatten R."/>
            <person name="Henze S."/>
            <person name="Korn B."/>
        </authorList>
    </citation>
    <scope>NUCLEOTIDE SEQUENCE [LARGE SCALE MRNA] (ISOFORM 1)</scope>
</reference>
<reference key="9">
    <citation type="journal article" date="2004" name="Nature">
        <title>The DNA sequence and biology of human chromosome 19.</title>
        <authorList>
            <person name="Grimwood J."/>
            <person name="Gordon L.A."/>
            <person name="Olsen A.S."/>
            <person name="Terry A."/>
            <person name="Schmutz J."/>
            <person name="Lamerdin J.E."/>
            <person name="Hellsten U."/>
            <person name="Goodstein D."/>
            <person name="Couronne O."/>
            <person name="Tran-Gyamfi M."/>
            <person name="Aerts A."/>
            <person name="Altherr M."/>
            <person name="Ashworth L."/>
            <person name="Bajorek E."/>
            <person name="Black S."/>
            <person name="Branscomb E."/>
            <person name="Caenepeel S."/>
            <person name="Carrano A.V."/>
            <person name="Caoile C."/>
            <person name="Chan Y.M."/>
            <person name="Christensen M."/>
            <person name="Cleland C.A."/>
            <person name="Copeland A."/>
            <person name="Dalin E."/>
            <person name="Dehal P."/>
            <person name="Denys M."/>
            <person name="Detter J.C."/>
            <person name="Escobar J."/>
            <person name="Flowers D."/>
            <person name="Fotopulos D."/>
            <person name="Garcia C."/>
            <person name="Georgescu A.M."/>
            <person name="Glavina T."/>
            <person name="Gomez M."/>
            <person name="Gonzales E."/>
            <person name="Groza M."/>
            <person name="Hammon N."/>
            <person name="Hawkins T."/>
            <person name="Haydu L."/>
            <person name="Ho I."/>
            <person name="Huang W."/>
            <person name="Israni S."/>
            <person name="Jett J."/>
            <person name="Kadner K."/>
            <person name="Kimball H."/>
            <person name="Kobayashi A."/>
            <person name="Larionov V."/>
            <person name="Leem S.-H."/>
            <person name="Lopez F."/>
            <person name="Lou Y."/>
            <person name="Lowry S."/>
            <person name="Malfatti S."/>
            <person name="Martinez D."/>
            <person name="McCready P.M."/>
            <person name="Medina C."/>
            <person name="Morgan J."/>
            <person name="Nelson K."/>
            <person name="Nolan M."/>
            <person name="Ovcharenko I."/>
            <person name="Pitluck S."/>
            <person name="Pollard M."/>
            <person name="Popkie A.P."/>
            <person name="Predki P."/>
            <person name="Quan G."/>
            <person name="Ramirez L."/>
            <person name="Rash S."/>
            <person name="Retterer J."/>
            <person name="Rodriguez A."/>
            <person name="Rogers S."/>
            <person name="Salamov A."/>
            <person name="Salazar A."/>
            <person name="She X."/>
            <person name="Smith D."/>
            <person name="Slezak T."/>
            <person name="Solovyev V."/>
            <person name="Thayer N."/>
            <person name="Tice H."/>
            <person name="Tsai M."/>
            <person name="Ustaszewska A."/>
            <person name="Vo N."/>
            <person name="Wagner M."/>
            <person name="Wheeler J."/>
            <person name="Wu K."/>
            <person name="Xie G."/>
            <person name="Yang J."/>
            <person name="Dubchak I."/>
            <person name="Furey T.S."/>
            <person name="DeJong P."/>
            <person name="Dickson M."/>
            <person name="Gordon D."/>
            <person name="Eichler E.E."/>
            <person name="Pennacchio L.A."/>
            <person name="Richardson P."/>
            <person name="Stubbs L."/>
            <person name="Rokhsar D.S."/>
            <person name="Myers R.M."/>
            <person name="Rubin E.M."/>
            <person name="Lucas S.M."/>
        </authorList>
    </citation>
    <scope>NUCLEOTIDE SEQUENCE [LARGE SCALE GENOMIC DNA]</scope>
</reference>
<reference key="10">
    <citation type="journal article" date="2004" name="Genome Res.">
        <title>The status, quality, and expansion of the NIH full-length cDNA project: the Mammalian Gene Collection (MGC).</title>
        <authorList>
            <consortium name="The MGC Project Team"/>
        </authorList>
    </citation>
    <scope>NUCLEOTIDE SEQUENCE [LARGE SCALE MRNA] (ISOFORM 1)</scope>
    <source>
        <tissue>Skin</tissue>
    </source>
</reference>
<reference key="11">
    <citation type="submission" date="2005-03" db="EMBL/GenBank/DDBJ databases">
        <authorList>
            <person name="Totoki Y."/>
            <person name="Toyoda A."/>
            <person name="Takeda T."/>
            <person name="Sakaki Y."/>
            <person name="Tanaka A."/>
            <person name="Yokoyama S."/>
            <person name="Ohara O."/>
            <person name="Nagase T."/>
            <person name="Kikuno R.F."/>
        </authorList>
    </citation>
    <scope>NUCLEOTIDE SEQUENCE [LARGE SCALE MRNA] OF 346-640 (ISOFORM 1)</scope>
    <source>
        <tissue>Brain</tissue>
    </source>
</reference>
<reference key="12">
    <citation type="journal article" date="1998" name="Nat. Biotechnol.">
        <title>Selection system for genes encoding nuclear-targeted proteins.</title>
        <authorList>
            <person name="Ueki N."/>
            <person name="Oda T."/>
            <person name="Kondo M."/>
            <person name="Yano K."/>
            <person name="Noguchi T."/>
            <person name="Muramatsu M.-A."/>
        </authorList>
    </citation>
    <scope>NUCLEOTIDE SEQUENCE [LARGE SCALE MRNA] OF 536-640 (ISOFORM 1)</scope>
    <source>
        <tissue>Fetal brain</tissue>
    </source>
</reference>
<reference key="13">
    <citation type="journal article" date="2001" name="FASEB J.">
        <title>Expression and regulation of the mammalian SUMO-1 E1 enzyme.</title>
        <authorList>
            <person name="Azuma Y."/>
            <person name="Tan S.-H."/>
            <person name="Cavenagh M.M."/>
            <person name="Ainsztein A.M."/>
            <person name="Saitoh H."/>
            <person name="Dasso M."/>
        </authorList>
    </citation>
    <scope>SUBCELLULAR LOCATION</scope>
    <scope>DIMERIZATION</scope>
    <scope>FUNCTION</scope>
</reference>
<reference key="14">
    <citation type="journal article" date="2001" name="J. Biol. Chem.">
        <title>Polymeric chains of SUMO-2 and SUMO-3 are conjugated to protein substrates by SAE1/SAE2 and Ubc9.</title>
        <authorList>
            <person name="Tatham M.H."/>
            <person name="Jaffray E."/>
            <person name="Vaughan O.A."/>
            <person name="Desterro J.M.P."/>
            <person name="Botting C.H."/>
            <person name="Naismith J.H."/>
            <person name="Hay R.T."/>
        </authorList>
    </citation>
    <scope>FUNCTION</scope>
</reference>
<reference key="15">
    <citation type="journal article" date="2006" name="Arch. Biochem. Biophys.">
        <title>A general approach for investigating enzymatic pathways and substrates for ubiquitin-like modifiers.</title>
        <authorList>
            <person name="Li T."/>
            <person name="Santockyte R."/>
            <person name="Shen R.-F."/>
            <person name="Tekle E."/>
            <person name="Wang G."/>
            <person name="Yang D.C.H."/>
            <person name="Chock P.B."/>
        </authorList>
    </citation>
    <scope>IDENTIFICATION BY MASS SPECTROMETRY</scope>
</reference>
<reference key="16">
    <citation type="journal article" date="2008" name="Proc. Natl. Acad. Sci. U.S.A.">
        <title>A quantitative atlas of mitotic phosphorylation.</title>
        <authorList>
            <person name="Dephoure N."/>
            <person name="Zhou C."/>
            <person name="Villen J."/>
            <person name="Beausoleil S.A."/>
            <person name="Bakalarski C.E."/>
            <person name="Elledge S.J."/>
            <person name="Gygi S.P."/>
        </authorList>
    </citation>
    <scope>PHOSPHORYLATION [LARGE SCALE ANALYSIS] AT SER-592</scope>
    <scope>IDENTIFICATION BY MASS SPECTROMETRY [LARGE SCALE ANALYSIS]</scope>
    <source>
        <tissue>Cervix carcinoma</tissue>
    </source>
</reference>
<reference key="17">
    <citation type="journal article" date="2009" name="Anal. Chem.">
        <title>Lys-N and trypsin cover complementary parts of the phosphoproteome in a refined SCX-based approach.</title>
        <authorList>
            <person name="Gauci S."/>
            <person name="Helbig A.O."/>
            <person name="Slijper M."/>
            <person name="Krijgsveld J."/>
            <person name="Heck A.J."/>
            <person name="Mohammed S."/>
        </authorList>
    </citation>
    <scope>IDENTIFICATION BY MASS SPECTROMETRY [LARGE SCALE ANALYSIS]</scope>
</reference>
<reference key="18">
    <citation type="journal article" date="2009" name="J. Biol. Chem.">
        <title>Conformational transition associated with E1-E2 interaction in small ubiquitin-like modifications.</title>
        <authorList>
            <person name="Wang J."/>
            <person name="Lee B."/>
            <person name="Cai S."/>
            <person name="Fukui L."/>
            <person name="Hu W."/>
            <person name="Chen Y."/>
        </authorList>
    </citation>
    <scope>INTERACTION WITH UBE2I</scope>
    <scope>FUNCTION</scope>
    <scope>MUTAGENESIS OF ASP-484 AND GLY-485</scope>
</reference>
<reference key="19">
    <citation type="journal article" date="2009" name="Science">
        <title>Lysine acetylation targets protein complexes and co-regulates major cellular functions.</title>
        <authorList>
            <person name="Choudhary C."/>
            <person name="Kumar C."/>
            <person name="Gnad F."/>
            <person name="Nielsen M.L."/>
            <person name="Rehman M."/>
            <person name="Walther T.C."/>
            <person name="Olsen J.V."/>
            <person name="Mann M."/>
        </authorList>
    </citation>
    <scope>ACETYLATION [LARGE SCALE ANALYSIS] AT LYS-271</scope>
    <scope>IDENTIFICATION BY MASS SPECTROMETRY [LARGE SCALE ANALYSIS]</scope>
</reference>
<reference key="20">
    <citation type="journal article" date="2010" name="Sci. Signal.">
        <title>Quantitative phosphoproteomics reveals widespread full phosphorylation site occupancy during mitosis.</title>
        <authorList>
            <person name="Olsen J.V."/>
            <person name="Vermeulen M."/>
            <person name="Santamaria A."/>
            <person name="Kumar C."/>
            <person name="Miller M.L."/>
            <person name="Jensen L.J."/>
            <person name="Gnad F."/>
            <person name="Cox J."/>
            <person name="Jensen T.S."/>
            <person name="Nigg E.A."/>
            <person name="Brunak S."/>
            <person name="Mann M."/>
        </authorList>
    </citation>
    <scope>PHOSPHORYLATION [LARGE SCALE ANALYSIS] AT SER-507</scope>
    <scope>IDENTIFICATION BY MASS SPECTROMETRY [LARGE SCALE ANALYSIS]</scope>
    <source>
        <tissue>Cervix carcinoma</tissue>
    </source>
</reference>
<reference key="21">
    <citation type="journal article" date="2011" name="BMC Syst. Biol.">
        <title>Initial characterization of the human central proteome.</title>
        <authorList>
            <person name="Burkard T.R."/>
            <person name="Planyavsky M."/>
            <person name="Kaupe I."/>
            <person name="Breitwieser F.P."/>
            <person name="Buerckstuemmer T."/>
            <person name="Bennett K.L."/>
            <person name="Superti-Furga G."/>
            <person name="Colinge J."/>
        </authorList>
    </citation>
    <scope>IDENTIFICATION BY MASS SPECTROMETRY [LARGE SCALE ANALYSIS]</scope>
</reference>
<reference key="22">
    <citation type="journal article" date="2012" name="J. Biol. Chem.">
        <title>Small ubiquitin-like modifier (SUMO) modification of E1 Cys domain inhibits E1 Cys domain enzymatic activity.</title>
        <authorList>
            <person name="Truong K."/>
            <person name="Lee T.D."/>
            <person name="Chen Y."/>
        </authorList>
    </citation>
    <scope>SUMOYLATION AT LYS-190; LYS-236; LYS-257; LYS-271 AND LYS-275</scope>
</reference>
<reference key="23">
    <citation type="journal article" date="2012" name="J. Biol. Chem.">
        <title>Sumoylation of SAE2 C terminus regulates SAE nuclear localization.</title>
        <authorList>
            <person name="Truong K."/>
            <person name="Lee T.D."/>
            <person name="Li B."/>
            <person name="Chen Y."/>
        </authorList>
    </citation>
    <scope>SUBCELLULAR LOCATION</scope>
    <scope>SUMOYLATION AT LYS-611; LYS-613; LYS-617 AND LYS-623</scope>
</reference>
<reference key="24">
    <citation type="journal article" date="2013" name="J. Proteome Res.">
        <title>Toward a comprehensive characterization of a human cancer cell phosphoproteome.</title>
        <authorList>
            <person name="Zhou H."/>
            <person name="Di Palma S."/>
            <person name="Preisinger C."/>
            <person name="Peng M."/>
            <person name="Polat A.N."/>
            <person name="Heck A.J."/>
            <person name="Mohammed S."/>
        </authorList>
    </citation>
    <scope>PHOSPHORYLATION [LARGE SCALE ANALYSIS] AT SER-507</scope>
    <scope>IDENTIFICATION BY MASS SPECTROMETRY [LARGE SCALE ANALYSIS]</scope>
    <source>
        <tissue>Erythroleukemia</tissue>
    </source>
</reference>
<reference key="25">
    <citation type="journal article" date="2014" name="J. Proteomics">
        <title>An enzyme assisted RP-RPLC approach for in-depth analysis of human liver phosphoproteome.</title>
        <authorList>
            <person name="Bian Y."/>
            <person name="Song C."/>
            <person name="Cheng K."/>
            <person name="Dong M."/>
            <person name="Wang F."/>
            <person name="Huang J."/>
            <person name="Sun D."/>
            <person name="Wang L."/>
            <person name="Ye M."/>
            <person name="Zou H."/>
        </authorList>
    </citation>
    <scope>PHOSPHORYLATION [LARGE SCALE ANALYSIS] AT SER-207</scope>
    <scope>IDENTIFICATION BY MASS SPECTROMETRY [LARGE SCALE ANALYSIS]</scope>
    <source>
        <tissue>Liver</tissue>
    </source>
</reference>
<reference key="26">
    <citation type="journal article" date="2014" name="Proc. Natl. Acad. Sci. U.S.A.">
        <title>Mapping of SUMO sites and analysis of SUMOylation changes induced by external stimuli.</title>
        <authorList>
            <person name="Impens F."/>
            <person name="Radoshevich L."/>
            <person name="Cossart P."/>
            <person name="Ribet D."/>
        </authorList>
    </citation>
    <scope>SUMOYLATION [LARGE SCALE ANALYSIS] AT LYS-164 AND LYS-420</scope>
    <scope>IDENTIFICATION BY MASS SPECTROMETRY [LARGE SCALE ANALYSIS]</scope>
</reference>
<reference key="27">
    <citation type="journal article" date="2015" name="Cell Rep.">
        <title>SUMO-2 orchestrates chromatin modifiers in response to DNA damage.</title>
        <authorList>
            <person name="Hendriks I.A."/>
            <person name="Treffers L.W."/>
            <person name="Verlaan-de Vries M."/>
            <person name="Olsen J.V."/>
            <person name="Vertegaal A.C."/>
        </authorList>
    </citation>
    <scope>SUMOYLATION [LARGE SCALE ANALYSIS] AT LYS-236</scope>
    <scope>IDENTIFICATION BY MASS SPECTROMETRY [LARGE SCALE ANALYSIS]</scope>
</reference>
<reference key="28">
    <citation type="journal article" date="2017" name="Am. J. Med. Genet. A">
        <title>Missense variant in UBA2 associated with aplasia cutis congenita, duane anomaly, hip dysplasia and other anomalies: A possible new disorder involving the SUMOylation pathway.</title>
        <authorList>
            <person name="Marble M."/>
            <person name="Guillen Sacoto M.J."/>
            <person name="Chikarmane R."/>
            <person name="Gargiulo D."/>
            <person name="Juusola J."/>
        </authorList>
    </citation>
    <scope>INVOLVEMENT IN ACCES</scope>
    <scope>VARIANT ACCES VAL-24</scope>
</reference>
<reference key="29">
    <citation type="journal article" date="2017" name="Nat. Struct. Mol. Biol.">
        <title>Site-specific mapping of the human SUMO proteome reveals co-modification with phosphorylation.</title>
        <authorList>
            <person name="Hendriks I.A."/>
            <person name="Lyon D."/>
            <person name="Young C."/>
            <person name="Jensen L.J."/>
            <person name="Vertegaal A.C."/>
            <person name="Nielsen M.L."/>
        </authorList>
    </citation>
    <scope>SUMOYLATION [LARGE SCALE ANALYSIS] AT LYS-236; LYS-257; LYS-371; LYS-420 AND LYS-540</scope>
    <scope>IDENTIFICATION BY MASS SPECTROMETRY [LARGE SCALE ANALYSIS]</scope>
</reference>
<reference key="30">
    <citation type="journal article" date="2005" name="EMBO J.">
        <title>Structures of the SUMO E1 provide mechanistic insights into SUMO activation and E2 recruitment to E1.</title>
        <authorList>
            <person name="Lois L.M."/>
            <person name="Lima C.D."/>
        </authorList>
    </citation>
    <scope>X-RAY CRYSTALLOGRAPHY (2.25 ANGSTROMS) IN COMPLEX WITH SAE1; SUMO1; ZINC IONS AND ATP</scope>
    <scope>FUNCTION</scope>
    <scope>SUBUNIT</scope>
    <scope>ACTIVE SITE</scope>
</reference>
<reference key="31">
    <citation type="journal article" date="2007" name="Mol. Cell">
        <title>The intrinsic affinity between E2 and the Cys domain of E1 in ubiquitin-like modifications.</title>
        <authorList>
            <person name="Wang J."/>
            <person name="Hu W."/>
            <person name="Cai S."/>
            <person name="Lee B."/>
            <person name="Song J."/>
            <person name="Chen Y."/>
        </authorList>
    </citation>
    <scope>STRUCTURE BY NMR OF 166-382 IN COMPLEX WITH UBE2I</scope>
    <scope>MUTAGENESIS OF ILE-235 AND ILE-238</scope>
    <scope>FUNCTION</scope>
    <scope>INTERACTION WITH UBE2I</scope>
</reference>
<reference key="32">
    <citation type="journal article" date="2010" name="Nature">
        <title>Active site remodelling accompanies thioester bond formation in the SUMO E1.</title>
        <authorList>
            <person name="Olsen S.K."/>
            <person name="Capili A.D."/>
            <person name="Lu X."/>
            <person name="Tan D.S."/>
            <person name="Lima C.D."/>
        </authorList>
    </citation>
    <scope>X-RAY CRYSTALLOGRAPHY (2.45 ANGSTROMS) IN COMPLEX WITH SAE1; SUMO1 AND REACTION INTERMEDIATE</scope>
    <scope>FUNCTION</scope>
    <scope>ACTIVE SITE</scope>
    <scope>SUBUNIT</scope>
    <scope>MUTAGENESIS OF ASN-56; LEU-57; ARG-59; LYS-72; ASP-117; CYS-173; THR-174 AND HIS-184</scope>
</reference>
<reference key="33">
    <citation type="journal article" date="2021" name="Genet. Med.">
        <title>UBA2 variants underlie a recognizable syndrome with variable aplasia cutis congenita and ectrodactyly.</title>
        <authorList>
            <person name="Schnur R.E."/>
            <person name="Yousaf S."/>
            <person name="Liu J."/>
            <person name="Chung W.K."/>
            <person name="Rhodes L."/>
            <person name="Marble M."/>
            <person name="Zambrano R.M."/>
            <person name="Sobreira N."/>
            <person name="Jayakar P."/>
            <person name="Pierpont M.E."/>
            <person name="Schultz M.J."/>
            <person name="Pichurin P.N."/>
            <person name="Olson R.J."/>
            <person name="Graham G.E."/>
            <person name="Osmond M."/>
            <person name="Contreras-Garcia G.A."/>
            <person name="Campo-Neira K.A."/>
            <person name="Penaloza-Mantilla C.A."/>
            <person name="Flage M."/>
            <person name="Kuppa S."/>
            <person name="Navarro K."/>
            <person name="Sacoto M.J.G."/>
            <person name="Wentzensen I.M."/>
            <person name="Scarano M.I."/>
            <person name="Juusola J."/>
            <person name="Prada C.E."/>
            <person name="Hufnagel R.B."/>
        </authorList>
    </citation>
    <scope>VARIANTS ACCES VAL-24; THR-56; 122-ARG--ASP-640 DEL; GLY-122; 267-LEU--ASP-640 DEL AND LYS-483</scope>
    <scope>CHARACTERIZATION OF VARIANTS ACCES VAL-24; GLY-122 AND LYS-483</scope>
</reference>
<gene>
    <name type="primary">UBA2</name>
    <name type="synonym">SAE2</name>
    <name type="synonym">UBLE1B</name>
    <name type="ORF">HRIHFB2115</name>
</gene>
<organism>
    <name type="scientific">Homo sapiens</name>
    <name type="common">Human</name>
    <dbReference type="NCBI Taxonomy" id="9606"/>
    <lineage>
        <taxon>Eukaryota</taxon>
        <taxon>Metazoa</taxon>
        <taxon>Chordata</taxon>
        <taxon>Craniata</taxon>
        <taxon>Vertebrata</taxon>
        <taxon>Euteleostomi</taxon>
        <taxon>Mammalia</taxon>
        <taxon>Eutheria</taxon>
        <taxon>Euarchontoglires</taxon>
        <taxon>Primates</taxon>
        <taxon>Haplorrhini</taxon>
        <taxon>Catarrhini</taxon>
        <taxon>Hominidae</taxon>
        <taxon>Homo</taxon>
    </lineage>
</organism>
<dbReference type="EC" id="2.3.2.-"/>
<dbReference type="EMBL" id="AF090384">
    <property type="protein sequence ID" value="AAD12784.1"/>
    <property type="molecule type" value="mRNA"/>
</dbReference>
<dbReference type="EMBL" id="AF079566">
    <property type="protein sequence ID" value="AAD23914.1"/>
    <property type="molecule type" value="mRNA"/>
</dbReference>
<dbReference type="EMBL" id="AF110957">
    <property type="protein sequence ID" value="AAD24434.1"/>
    <property type="molecule type" value="mRNA"/>
</dbReference>
<dbReference type="EMBL" id="U35832">
    <property type="protein sequence ID" value="AAC99992.1"/>
    <property type="molecule type" value="mRNA"/>
</dbReference>
<dbReference type="EMBL" id="AL136905">
    <property type="protein sequence ID" value="CAB66839.1"/>
    <property type="molecule type" value="mRNA"/>
</dbReference>
<dbReference type="EMBL" id="AK124730">
    <property type="protein sequence ID" value="BAG54081.1"/>
    <property type="molecule type" value="mRNA"/>
</dbReference>
<dbReference type="EMBL" id="BT009781">
    <property type="protein sequence ID" value="AAP88783.1"/>
    <property type="molecule type" value="mRNA"/>
</dbReference>
<dbReference type="EMBL" id="CR456756">
    <property type="protein sequence ID" value="CAG33037.1"/>
    <property type="molecule type" value="mRNA"/>
</dbReference>
<dbReference type="EMBL" id="AC008747">
    <property type="status" value="NOT_ANNOTATED_CDS"/>
    <property type="molecule type" value="Genomic_DNA"/>
</dbReference>
<dbReference type="EMBL" id="BC003153">
    <property type="protein sequence ID" value="AAH03153.1"/>
    <property type="molecule type" value="mRNA"/>
</dbReference>
<dbReference type="EMBL" id="AB208872">
    <property type="protein sequence ID" value="BAD92109.1"/>
    <property type="molecule type" value="mRNA"/>
</dbReference>
<dbReference type="EMBL" id="AB015337">
    <property type="protein sequence ID" value="BAA34795.1"/>
    <property type="molecule type" value="mRNA"/>
</dbReference>
<dbReference type="CCDS" id="CCDS12439.1">
    <molecule id="Q9UBT2-1"/>
</dbReference>
<dbReference type="CCDS" id="CCDS92583.1">
    <molecule id="Q9UBT2-2"/>
</dbReference>
<dbReference type="PIR" id="T46936">
    <property type="entry name" value="T46936"/>
</dbReference>
<dbReference type="RefSeq" id="NP_001398068.1">
    <molecule id="Q9UBT2-2"/>
    <property type="nucleotide sequence ID" value="NM_001411139.1"/>
</dbReference>
<dbReference type="RefSeq" id="NP_005490.1">
    <molecule id="Q9UBT2-1"/>
    <property type="nucleotide sequence ID" value="NM_005499.3"/>
</dbReference>
<dbReference type="PDB" id="1Y8Q">
    <property type="method" value="X-ray"/>
    <property type="resolution" value="2.25 A"/>
    <property type="chains" value="B/D=1-640"/>
</dbReference>
<dbReference type="PDB" id="1Y8R">
    <property type="method" value="X-ray"/>
    <property type="resolution" value="2.75 A"/>
    <property type="chains" value="B/E=1-640"/>
</dbReference>
<dbReference type="PDB" id="2PX9">
    <property type="method" value="NMR"/>
    <property type="chains" value="A=166-382"/>
</dbReference>
<dbReference type="PDB" id="3KYC">
    <property type="method" value="X-ray"/>
    <property type="resolution" value="2.45 A"/>
    <property type="chains" value="B=1-640"/>
</dbReference>
<dbReference type="PDB" id="3KYD">
    <property type="method" value="X-ray"/>
    <property type="resolution" value="2.61 A"/>
    <property type="chains" value="B=1-549"/>
</dbReference>
<dbReference type="PDB" id="4W5V">
    <property type="method" value="X-ray"/>
    <property type="resolution" value="2.50 A"/>
    <property type="chains" value="B=445-561"/>
</dbReference>
<dbReference type="PDB" id="5FQ2">
    <property type="method" value="X-ray"/>
    <property type="resolution" value="2.20 A"/>
    <property type="chains" value="B=446-547"/>
</dbReference>
<dbReference type="PDB" id="6CWY">
    <property type="method" value="X-ray"/>
    <property type="resolution" value="2.46 A"/>
    <property type="chains" value="D=1-640"/>
</dbReference>
<dbReference type="PDB" id="6CWZ">
    <property type="method" value="X-ray"/>
    <property type="resolution" value="3.10 A"/>
    <property type="chains" value="D=1-640"/>
</dbReference>
<dbReference type="PDB" id="6XOG">
    <property type="method" value="X-ray"/>
    <property type="resolution" value="1.98 A"/>
    <property type="chains" value="B=1-640"/>
</dbReference>
<dbReference type="PDB" id="6XOH">
    <property type="method" value="X-ray"/>
    <property type="resolution" value="2.23 A"/>
    <property type="chains" value="B=1-640"/>
</dbReference>
<dbReference type="PDB" id="6XOI">
    <property type="method" value="X-ray"/>
    <property type="resolution" value="2.00 A"/>
    <property type="chains" value="B=1-640"/>
</dbReference>
<dbReference type="PDBsum" id="1Y8Q"/>
<dbReference type="PDBsum" id="1Y8R"/>
<dbReference type="PDBsum" id="2PX9"/>
<dbReference type="PDBsum" id="3KYC"/>
<dbReference type="PDBsum" id="3KYD"/>
<dbReference type="PDBsum" id="4W5V"/>
<dbReference type="PDBsum" id="5FQ2"/>
<dbReference type="PDBsum" id="6CWY"/>
<dbReference type="PDBsum" id="6CWZ"/>
<dbReference type="PDBsum" id="6XOG"/>
<dbReference type="PDBsum" id="6XOH"/>
<dbReference type="PDBsum" id="6XOI"/>
<dbReference type="SMR" id="Q9UBT2"/>
<dbReference type="BioGRID" id="115365">
    <property type="interactions" value="253"/>
</dbReference>
<dbReference type="ComplexPortal" id="CPX-2161">
    <property type="entry name" value="SUMO activating enzyme complex, SAE1-UBA2"/>
</dbReference>
<dbReference type="CORUM" id="Q9UBT2"/>
<dbReference type="DIP" id="DIP-35136N"/>
<dbReference type="FunCoup" id="Q9UBT2">
    <property type="interactions" value="4590"/>
</dbReference>
<dbReference type="IntAct" id="Q9UBT2">
    <property type="interactions" value="31"/>
</dbReference>
<dbReference type="MINT" id="Q9UBT2"/>
<dbReference type="STRING" id="9606.ENSP00000246548"/>
<dbReference type="BindingDB" id="Q9UBT2"/>
<dbReference type="ChEMBL" id="CHEMBL2095174"/>
<dbReference type="ChEMBL" id="CHEMBL3137290"/>
<dbReference type="DrugCentral" id="Q9UBT2"/>
<dbReference type="GlyGen" id="Q9UBT2">
    <property type="glycosylation" value="1 site, 1 O-linked glycan (1 site)"/>
</dbReference>
<dbReference type="iPTMnet" id="Q9UBT2"/>
<dbReference type="MetOSite" id="Q9UBT2"/>
<dbReference type="PhosphoSitePlus" id="Q9UBT2"/>
<dbReference type="SwissPalm" id="Q9UBT2"/>
<dbReference type="BioMuta" id="UBA2"/>
<dbReference type="DMDM" id="42559898"/>
<dbReference type="jPOST" id="Q9UBT2"/>
<dbReference type="MassIVE" id="Q9UBT2"/>
<dbReference type="PaxDb" id="9606-ENSP00000246548"/>
<dbReference type="PeptideAtlas" id="Q9UBT2"/>
<dbReference type="ProteomicsDB" id="3787"/>
<dbReference type="ProteomicsDB" id="84055">
    <molecule id="Q9UBT2-1"/>
</dbReference>
<dbReference type="Pumba" id="Q9UBT2"/>
<dbReference type="Antibodypedia" id="29159">
    <property type="antibodies" value="367 antibodies from 41 providers"/>
</dbReference>
<dbReference type="DNASU" id="10054"/>
<dbReference type="Ensembl" id="ENST00000246548.9">
    <molecule id="Q9UBT2-1"/>
    <property type="protein sequence ID" value="ENSP00000246548.3"/>
    <property type="gene ID" value="ENSG00000126261.13"/>
</dbReference>
<dbReference type="Ensembl" id="ENST00000439527.6">
    <molecule id="Q9UBT2-2"/>
    <property type="protein sequence ID" value="ENSP00000437484.1"/>
    <property type="gene ID" value="ENSG00000126261.13"/>
</dbReference>
<dbReference type="GeneID" id="10054"/>
<dbReference type="KEGG" id="hsa:10054"/>
<dbReference type="MANE-Select" id="ENST00000246548.9">
    <property type="protein sequence ID" value="ENSP00000246548.3"/>
    <property type="RefSeq nucleotide sequence ID" value="NM_005499.3"/>
    <property type="RefSeq protein sequence ID" value="NP_005490.1"/>
</dbReference>
<dbReference type="UCSC" id="uc002nvk.4">
    <molecule id="Q9UBT2-1"/>
    <property type="organism name" value="human"/>
</dbReference>
<dbReference type="AGR" id="HGNC:30661"/>
<dbReference type="CTD" id="10054"/>
<dbReference type="DisGeNET" id="10054"/>
<dbReference type="GeneCards" id="UBA2"/>
<dbReference type="HGNC" id="HGNC:30661">
    <property type="gene designation" value="UBA2"/>
</dbReference>
<dbReference type="HPA" id="ENSG00000126261">
    <property type="expression patterns" value="Low tissue specificity"/>
</dbReference>
<dbReference type="MalaCards" id="UBA2"/>
<dbReference type="MIM" id="613295">
    <property type="type" value="gene"/>
</dbReference>
<dbReference type="MIM" id="619959">
    <property type="type" value="phenotype"/>
</dbReference>
<dbReference type="neXtProt" id="NX_Q9UBT2"/>
<dbReference type="OpenTargets" id="ENSG00000126261"/>
<dbReference type="Orphanet" id="1114">
    <property type="disease" value="Aplasia cutis congenita"/>
</dbReference>
<dbReference type="PharmGKB" id="PA162407583"/>
<dbReference type="VEuPathDB" id="HostDB:ENSG00000126261"/>
<dbReference type="eggNOG" id="KOG2013">
    <property type="taxonomic scope" value="Eukaryota"/>
</dbReference>
<dbReference type="GeneTree" id="ENSGT00550000074924"/>
<dbReference type="HOGENOM" id="CLU_013325_7_4_1"/>
<dbReference type="InParanoid" id="Q9UBT2"/>
<dbReference type="OMA" id="TPSEHIH"/>
<dbReference type="OrthoDB" id="10255449at2759"/>
<dbReference type="PAN-GO" id="Q9UBT2">
    <property type="GO annotations" value="4 GO annotations based on evolutionary models"/>
</dbReference>
<dbReference type="PhylomeDB" id="Q9UBT2"/>
<dbReference type="TreeFam" id="TF300765"/>
<dbReference type="PathwayCommons" id="Q9UBT2"/>
<dbReference type="Reactome" id="R-HSA-3065676">
    <property type="pathway name" value="SUMO is conjugated to E1 (UBA2:SAE1)"/>
</dbReference>
<dbReference type="Reactome" id="R-HSA-3065678">
    <property type="pathway name" value="SUMO is transferred from E1 to E2 (UBE2I, UBC9)"/>
</dbReference>
<dbReference type="SignaLink" id="Q9UBT2"/>
<dbReference type="SIGNOR" id="Q9UBT2"/>
<dbReference type="UniPathway" id="UPA00886"/>
<dbReference type="BioGRID-ORCS" id="10054">
    <property type="hits" value="756 hits in 1172 CRISPR screens"/>
</dbReference>
<dbReference type="ChiTaRS" id="UBA2">
    <property type="organism name" value="human"/>
</dbReference>
<dbReference type="EvolutionaryTrace" id="Q9UBT2"/>
<dbReference type="GeneWiki" id="UBA2"/>
<dbReference type="GenomeRNAi" id="10054"/>
<dbReference type="Pharos" id="Q9UBT2">
    <property type="development level" value="Tbio"/>
</dbReference>
<dbReference type="PRO" id="PR:Q9UBT2"/>
<dbReference type="Proteomes" id="UP000005640">
    <property type="component" value="Chromosome 19"/>
</dbReference>
<dbReference type="RNAct" id="Q9UBT2">
    <property type="molecule type" value="protein"/>
</dbReference>
<dbReference type="Bgee" id="ENSG00000126261">
    <property type="expression patterns" value="Expressed in ventricular zone and 135 other cell types or tissues"/>
</dbReference>
<dbReference type="ExpressionAtlas" id="Q9UBT2">
    <property type="expression patterns" value="baseline and differential"/>
</dbReference>
<dbReference type="GO" id="GO:0005737">
    <property type="term" value="C:cytoplasm"/>
    <property type="evidence" value="ECO:0000318"/>
    <property type="project" value="GO_Central"/>
</dbReference>
<dbReference type="GO" id="GO:0005730">
    <property type="term" value="C:nucleolus"/>
    <property type="evidence" value="ECO:0000314"/>
    <property type="project" value="HPA"/>
</dbReference>
<dbReference type="GO" id="GO:0005654">
    <property type="term" value="C:nucleoplasm"/>
    <property type="evidence" value="ECO:0000314"/>
    <property type="project" value="HPA"/>
</dbReference>
<dbReference type="GO" id="GO:0031510">
    <property type="term" value="C:SUMO activating enzyme complex"/>
    <property type="evidence" value="ECO:0000314"/>
    <property type="project" value="UniProtKB"/>
</dbReference>
<dbReference type="GO" id="GO:0005524">
    <property type="term" value="F:ATP binding"/>
    <property type="evidence" value="ECO:0000315"/>
    <property type="project" value="CAFA"/>
</dbReference>
<dbReference type="GO" id="GO:0000287">
    <property type="term" value="F:magnesium ion binding"/>
    <property type="evidence" value="ECO:0000315"/>
    <property type="project" value="CAFA"/>
</dbReference>
<dbReference type="GO" id="GO:0046982">
    <property type="term" value="F:protein heterodimerization activity"/>
    <property type="evidence" value="ECO:0000353"/>
    <property type="project" value="UniProtKB"/>
</dbReference>
<dbReference type="GO" id="GO:0044388">
    <property type="term" value="F:small protein activating enzyme binding"/>
    <property type="evidence" value="ECO:0000353"/>
    <property type="project" value="CAFA"/>
</dbReference>
<dbReference type="GO" id="GO:0019948">
    <property type="term" value="F:SUMO activating enzyme activity"/>
    <property type="evidence" value="ECO:0000314"/>
    <property type="project" value="UniProtKB"/>
</dbReference>
<dbReference type="GO" id="GO:0032183">
    <property type="term" value="F:SUMO binding"/>
    <property type="evidence" value="ECO:0000353"/>
    <property type="project" value="CAFA"/>
</dbReference>
<dbReference type="GO" id="GO:0016740">
    <property type="term" value="F:transferase activity"/>
    <property type="evidence" value="ECO:0007669"/>
    <property type="project" value="UniProtKB-KW"/>
</dbReference>
<dbReference type="GO" id="GO:0044390">
    <property type="term" value="F:ubiquitin-like protein conjugating enzyme binding"/>
    <property type="evidence" value="ECO:0000353"/>
    <property type="project" value="CAFA"/>
</dbReference>
<dbReference type="GO" id="GO:0033235">
    <property type="term" value="P:positive regulation of protein sumoylation"/>
    <property type="evidence" value="ECO:0000314"/>
    <property type="project" value="UniProtKB"/>
</dbReference>
<dbReference type="GO" id="GO:0016925">
    <property type="term" value="P:protein sumoylation"/>
    <property type="evidence" value="ECO:0000314"/>
    <property type="project" value="UniProtKB"/>
</dbReference>
<dbReference type="CDD" id="cd01489">
    <property type="entry name" value="Uba2_SUMO"/>
    <property type="match status" value="1"/>
</dbReference>
<dbReference type="DisProt" id="DP00486"/>
<dbReference type="FunFam" id="1.10.10.520:FF:000002">
    <property type="entry name" value="SUMO-activating enzyme subunit 2"/>
    <property type="match status" value="1"/>
</dbReference>
<dbReference type="FunFam" id="3.10.290.20:FF:000002">
    <property type="entry name" value="SUMO-activating enzyme subunit 2"/>
    <property type="match status" value="1"/>
</dbReference>
<dbReference type="FunFam" id="3.40.50.720:FF:000618">
    <property type="entry name" value="SUMO-activating enzyme subunit 2"/>
    <property type="match status" value="1"/>
</dbReference>
<dbReference type="FunFam" id="3.50.50.80:FF:000002">
    <property type="entry name" value="SUMO-activating enzyme subunit 2"/>
    <property type="match status" value="1"/>
</dbReference>
<dbReference type="Gene3D" id="1.10.10.520">
    <property type="entry name" value="Ubiquitin activating enzymes (Uba3). Chain: B, domain 2"/>
    <property type="match status" value="1"/>
</dbReference>
<dbReference type="Gene3D" id="3.50.50.80">
    <property type="entry name" value="Ubiquitin-activating enzyme E1, inactive adenylation domain, subdomain 1"/>
    <property type="match status" value="1"/>
</dbReference>
<dbReference type="Gene3D" id="3.10.290.20">
    <property type="entry name" value="Ubiquitin-like 2 activating enzyme e1b. Chain: B, domain 3"/>
    <property type="match status" value="2"/>
</dbReference>
<dbReference type="IDEAL" id="IID00104"/>
<dbReference type="InterPro" id="IPR045886">
    <property type="entry name" value="ThiF/MoeB/HesA"/>
</dbReference>
<dbReference type="InterPro" id="IPR000594">
    <property type="entry name" value="ThiF_NAD_FAD-bd"/>
</dbReference>
<dbReference type="InterPro" id="IPR028077">
    <property type="entry name" value="UAE_UbL_dom"/>
</dbReference>
<dbReference type="InterPro" id="IPR042449">
    <property type="entry name" value="Ub-E1_IAD_1"/>
</dbReference>
<dbReference type="InterPro" id="IPR023318">
    <property type="entry name" value="Ub_act_enz_dom_a_sf"/>
</dbReference>
<dbReference type="InterPro" id="IPR030661">
    <property type="entry name" value="Uba2"/>
</dbReference>
<dbReference type="InterPro" id="IPR032426">
    <property type="entry name" value="UBA2_C"/>
</dbReference>
<dbReference type="InterPro" id="IPR035985">
    <property type="entry name" value="Ubiquitin-activating_enz"/>
</dbReference>
<dbReference type="InterPro" id="IPR018074">
    <property type="entry name" value="UBQ-activ_enz_E1_CS"/>
</dbReference>
<dbReference type="InterPro" id="IPR033127">
    <property type="entry name" value="UBQ-activ_enz_E1_Cys_AS"/>
</dbReference>
<dbReference type="PANTHER" id="PTHR10953:SF5">
    <property type="entry name" value="SUMO-ACTIVATING ENZYME SUBUNIT 2"/>
    <property type="match status" value="1"/>
</dbReference>
<dbReference type="PANTHER" id="PTHR10953">
    <property type="entry name" value="UBIQUITIN-ACTIVATING ENZYME E1"/>
    <property type="match status" value="1"/>
</dbReference>
<dbReference type="Pfam" id="PF00899">
    <property type="entry name" value="ThiF"/>
    <property type="match status" value="1"/>
</dbReference>
<dbReference type="Pfam" id="PF14732">
    <property type="entry name" value="UAE_UbL"/>
    <property type="match status" value="1"/>
</dbReference>
<dbReference type="Pfam" id="PF16195">
    <property type="entry name" value="UBA2_C"/>
    <property type="match status" value="1"/>
</dbReference>
<dbReference type="PIRSF" id="PIRSF039133">
    <property type="entry name" value="SUMO_E1B"/>
    <property type="match status" value="1"/>
</dbReference>
<dbReference type="SUPFAM" id="SSF69572">
    <property type="entry name" value="Activating enzymes of the ubiquitin-like proteins"/>
    <property type="match status" value="1"/>
</dbReference>
<dbReference type="PROSITE" id="PS00536">
    <property type="entry name" value="UBIQUITIN_ACTIVAT_1"/>
    <property type="match status" value="1"/>
</dbReference>
<dbReference type="PROSITE" id="PS00865">
    <property type="entry name" value="UBIQUITIN_ACTIVAT_2"/>
    <property type="match status" value="1"/>
</dbReference>
<keyword id="KW-0002">3D-structure</keyword>
<keyword id="KW-0007">Acetylation</keyword>
<keyword id="KW-0025">Alternative splicing</keyword>
<keyword id="KW-0067">ATP-binding</keyword>
<keyword id="KW-0963">Cytoplasm</keyword>
<keyword id="KW-0225">Disease variant</keyword>
<keyword id="KW-0038">Ectodermal dysplasia</keyword>
<keyword id="KW-1017">Isopeptide bond</keyword>
<keyword id="KW-0479">Metal-binding</keyword>
<keyword id="KW-0547">Nucleotide-binding</keyword>
<keyword id="KW-0539">Nucleus</keyword>
<keyword id="KW-0597">Phosphoprotein</keyword>
<keyword id="KW-1267">Proteomics identification</keyword>
<keyword id="KW-1185">Reference proteome</keyword>
<keyword id="KW-0808">Transferase</keyword>
<keyword id="KW-0832">Ubl conjugation</keyword>
<keyword id="KW-0833">Ubl conjugation pathway</keyword>
<keyword id="KW-0862">Zinc</keyword>
<proteinExistence type="evidence at protein level"/>